<reference key="1">
    <citation type="journal article" date="2004" name="Gene Expr. Patterns">
        <title>Isolation and expression pattern of three mouse homologues of chick Rgm.</title>
        <authorList>
            <person name="Schmidtmer J."/>
            <person name="Engelkamp D."/>
        </authorList>
    </citation>
    <scope>NUCLEOTIDE SEQUENCE [MRNA] (ISOFORM 2)</scope>
    <scope>DEVELOPMENTAL STAGE</scope>
</reference>
<reference key="2">
    <citation type="journal article" date="2004" name="Genome Res.">
        <title>The status, quality, and expansion of the NIH full-length cDNA project: the Mammalian Gene Collection (MGC).</title>
        <authorList>
            <consortium name="The MGC Project Team"/>
        </authorList>
    </citation>
    <scope>NUCLEOTIDE SEQUENCE [LARGE SCALE MRNA] (ISOFORMS 1 AND 2)</scope>
    <source>
        <strain>C57BL/6J</strain>
        <strain>FVB/N</strain>
        <tissue>Brain</tissue>
        <tissue>Mammary gland</tissue>
    </source>
</reference>
<reference key="3">
    <citation type="journal article" date="2004" name="J. Neurosci.">
        <title>Repulsive guidance molecule (RGM) gene function is required for neural tube closure but not retinal topography in the mouse visual system.</title>
        <authorList>
            <person name="Niederkofler V."/>
            <person name="Salie R."/>
            <person name="Sigrist M."/>
            <person name="Arber S."/>
        </authorList>
    </citation>
    <scope>FUNCTION</scope>
</reference>
<reference key="4">
    <citation type="journal article" date="2004" name="J. Neurosci.">
        <title>The repulsive guidance molecule RGMa is involved in the formation of afferent connections in the dentate gyrus.</title>
        <authorList>
            <person name="Brinks H."/>
            <person name="Conrad S."/>
            <person name="Vogt J."/>
            <person name="Oldekamp J."/>
            <person name="Sierra A."/>
            <person name="Deitinghoff L."/>
            <person name="Bechmann I."/>
            <person name="Alvarez-Bolado G."/>
            <person name="Heimrich B."/>
            <person name="Monnier P.P."/>
            <person name="Mueller B.K."/>
            <person name="Skutella T."/>
        </authorList>
    </citation>
    <scope>FUNCTION</scope>
    <scope>DEVELOPMENTAL STAGE</scope>
</reference>
<reference key="5">
    <citation type="journal article" date="2005" name="J. Biol. Chem.">
        <title>Repulsive guidance molecule (RGMa), a DRAGON homologue, is a bone morphogenetic protein co-receptor.</title>
        <authorList>
            <person name="Babitt J.L."/>
            <person name="Zhang Y."/>
            <person name="Samad T.A."/>
            <person name="Xia Y."/>
            <person name="Tang J."/>
            <person name="Campagna J.A."/>
            <person name="Schneyer A.L."/>
            <person name="Woolf C.J."/>
            <person name="Lin H.Y."/>
        </authorList>
    </citation>
    <scope>FUNCTION</scope>
    <scope>INTERACTION WITH BMP2 AND BMP4</scope>
</reference>
<reference key="6">
    <citation type="journal article" date="2007" name="J. Biol. Chem.">
        <title>Neogenin-RGMa signaling at the growth cone is bone morphogenetic protein-independent and involves RhoA, ROCK, and PKC.</title>
        <authorList>
            <person name="Conrad S."/>
            <person name="Genth H."/>
            <person name="Hofmann F."/>
            <person name="Just I."/>
            <person name="Skutella T."/>
        </authorList>
    </citation>
    <scope>FUNCTION</scope>
    <scope>INTERACTION WITH NEO1</scope>
</reference>
<reference key="7">
    <citation type="journal article" date="2007" name="J. Biol. Chem.">
        <title>Repulsive guidance molecule RGMa alters utilization of bone morphogenetic protein (BMP) type II receptors by BMP2 and BMP4.</title>
        <authorList>
            <person name="Xia Y."/>
            <person name="Yu P.B."/>
            <person name="Sidis Y."/>
            <person name="Beppu H."/>
            <person name="Bloch K.D."/>
            <person name="Schneyer A.L."/>
            <person name="Lin H.Y."/>
        </authorList>
    </citation>
    <scope>FUNCTION</scope>
    <scope>INTERACTION WITH BMP2 AND BMP4</scope>
</reference>
<reference key="8">
    <citation type="journal article" date="2007" name="J. Neurochem.">
        <title>RGMa inhibits neurite outgrowth of neuronal progenitors from murine enteric nervous system via the neogenin receptor in vitro.</title>
        <authorList>
            <person name="Metzger M."/>
            <person name="Conrad S."/>
            <person name="Skutella T."/>
            <person name="Just L."/>
        </authorList>
    </citation>
    <scope>FUNCTION</scope>
</reference>
<reference key="9">
    <citation type="journal article" date="2008" name="Biochem. Biophys. Res. Commun.">
        <title>Inhibition of branching and spine maturation by repulsive guidance molecule in cultured cortical neurons.</title>
        <authorList>
            <person name="Yoshida J."/>
            <person name="Kubo T."/>
            <person name="Yamashita T."/>
        </authorList>
    </citation>
    <scope>FUNCTION</scope>
</reference>
<keyword id="KW-0025">Alternative splicing</keyword>
<keyword id="KW-0068">Autocatalytic cleavage</keyword>
<keyword id="KW-1003">Cell membrane</keyword>
<keyword id="KW-1015">Disulfide bond</keyword>
<keyword id="KW-0325">Glycoprotein</keyword>
<keyword id="KW-0336">GPI-anchor</keyword>
<keyword id="KW-0449">Lipoprotein</keyword>
<keyword id="KW-0472">Membrane</keyword>
<keyword id="KW-1185">Reference proteome</keyword>
<keyword id="KW-0732">Signal</keyword>
<protein>
    <recommendedName>
        <fullName>Repulsive guidance molecule A</fullName>
    </recommendedName>
    <alternativeName>
        <fullName>RGM domain family member A</fullName>
    </alternativeName>
</protein>
<accession>Q6PCX7</accession>
<accession>Q7TQ34</accession>
<accession>Q8CIH6</accession>
<proteinExistence type="evidence at protein level"/>
<feature type="signal peptide" evidence="2">
    <location>
        <begin position="1"/>
        <end position="47"/>
    </location>
</feature>
<feature type="propeptide" id="PRO_0000030388" description="Removed in mature form" evidence="1">
    <location>
        <begin position="48"/>
        <end position="169"/>
    </location>
</feature>
<feature type="chain" id="PRO_0000030389" description="Repulsive guidance molecule A">
    <location>
        <begin position="170"/>
        <end position="427"/>
    </location>
</feature>
<feature type="propeptide" id="PRO_0000030390" description="Removed in mature form" evidence="2">
    <location>
        <begin position="428"/>
        <end position="454"/>
    </location>
</feature>
<feature type="region of interest" description="Disordered" evidence="3">
    <location>
        <begin position="114"/>
        <end position="141"/>
    </location>
</feature>
<feature type="compositionally biased region" description="Polar residues" evidence="3">
    <location>
        <begin position="114"/>
        <end position="126"/>
    </location>
</feature>
<feature type="site" description="Cleavage; by autolysis" evidence="1">
    <location>
        <begin position="169"/>
        <end position="170"/>
    </location>
</feature>
<feature type="lipid moiety-binding region" description="GPI-anchor amidated alanine" evidence="2">
    <location>
        <position position="427"/>
    </location>
</feature>
<feature type="glycosylation site" description="N-linked (GlcNAc...) asparagine" evidence="2">
    <location>
        <position position="115"/>
    </location>
</feature>
<feature type="glycosylation site" description="N-linked (GlcNAc...) asparagine" evidence="2">
    <location>
        <position position="160"/>
    </location>
</feature>
<feature type="glycosylation site" description="N-linked (GlcNAc...) asparagine" evidence="2">
    <location>
        <position position="388"/>
    </location>
</feature>
<feature type="disulfide bond" evidence="1">
    <location>
        <begin position="146"/>
        <end position="227"/>
    </location>
</feature>
<feature type="disulfide bond" evidence="1">
    <location>
        <begin position="164"/>
        <end position="316"/>
    </location>
</feature>
<feature type="splice variant" id="VSP_011316" description="In isoform 2." evidence="12 13">
    <location>
        <begin position="1"/>
        <end position="16"/>
    </location>
</feature>
<feature type="sequence conflict" description="In Ref. 2; AAH23870." evidence="14" ref="2">
    <location>
        <position position="424"/>
    </location>
</feature>
<dbReference type="EMBL" id="AJ557513">
    <property type="protein sequence ID" value="CAD89718.1"/>
    <property type="molecule type" value="mRNA"/>
</dbReference>
<dbReference type="EMBL" id="BC023870">
    <property type="protein sequence ID" value="AAH23870.2"/>
    <property type="molecule type" value="mRNA"/>
</dbReference>
<dbReference type="EMBL" id="BC059072">
    <property type="protein sequence ID" value="AAH59072.1"/>
    <property type="molecule type" value="mRNA"/>
</dbReference>
<dbReference type="CCDS" id="CCDS21362.2">
    <molecule id="Q6PCX7-1"/>
</dbReference>
<dbReference type="RefSeq" id="NP_808408.2">
    <molecule id="Q6PCX7-1"/>
    <property type="nucleotide sequence ID" value="NM_177740.5"/>
</dbReference>
<dbReference type="RefSeq" id="XP_006540965.1">
    <molecule id="Q6PCX7-2"/>
    <property type="nucleotide sequence ID" value="XM_006540902.2"/>
</dbReference>
<dbReference type="SMR" id="Q6PCX7"/>
<dbReference type="FunCoup" id="Q6PCX7">
    <property type="interactions" value="737"/>
</dbReference>
<dbReference type="STRING" id="10090.ENSMUSP00000091870"/>
<dbReference type="GlyCosmos" id="Q6PCX7">
    <property type="glycosylation" value="3 sites, No reported glycans"/>
</dbReference>
<dbReference type="GlyGen" id="Q6PCX7">
    <property type="glycosylation" value="3 sites, 2 N-linked glycans (2 sites)"/>
</dbReference>
<dbReference type="PhosphoSitePlus" id="Q6PCX7"/>
<dbReference type="SwissPalm" id="Q6PCX7"/>
<dbReference type="PaxDb" id="10090-ENSMUSP00000091870"/>
<dbReference type="PeptideAtlas" id="Q6PCX7"/>
<dbReference type="ProteomicsDB" id="255322">
    <molecule id="Q6PCX7-1"/>
</dbReference>
<dbReference type="ProteomicsDB" id="255323">
    <molecule id="Q6PCX7-2"/>
</dbReference>
<dbReference type="Pumba" id="Q6PCX7"/>
<dbReference type="Antibodypedia" id="43886">
    <property type="antibodies" value="275 antibodies from 28 providers"/>
</dbReference>
<dbReference type="DNASU" id="244058"/>
<dbReference type="Ensembl" id="ENSMUST00000094312.12">
    <molecule id="Q6PCX7-1"/>
    <property type="protein sequence ID" value="ENSMUSP00000091870.6"/>
    <property type="gene ID" value="ENSMUSG00000070509.16"/>
</dbReference>
<dbReference type="Ensembl" id="ENSMUST00000139780.3">
    <molecule id="Q6PCX7-2"/>
    <property type="protein sequence ID" value="ENSMUSP00000145758.2"/>
    <property type="gene ID" value="ENSMUSG00000070509.16"/>
</dbReference>
<dbReference type="GeneID" id="244058"/>
<dbReference type="KEGG" id="mmu:244058"/>
<dbReference type="UCSC" id="uc009hqz.2">
    <molecule id="Q6PCX7-1"/>
    <property type="organism name" value="mouse"/>
</dbReference>
<dbReference type="AGR" id="MGI:2679262"/>
<dbReference type="CTD" id="56963"/>
<dbReference type="MGI" id="MGI:2679262">
    <property type="gene designation" value="Rgma"/>
</dbReference>
<dbReference type="VEuPathDB" id="HostDB:ENSMUSG00000070509"/>
<dbReference type="eggNOG" id="ENOG502QSTJ">
    <property type="taxonomic scope" value="Eukaryota"/>
</dbReference>
<dbReference type="GeneTree" id="ENSGT00950000183112"/>
<dbReference type="HOGENOM" id="CLU_032775_1_1_1"/>
<dbReference type="InParanoid" id="Q6PCX7"/>
<dbReference type="OMA" id="LCWLCLL"/>
<dbReference type="OrthoDB" id="10013795at2759"/>
<dbReference type="PhylomeDB" id="Q6PCX7"/>
<dbReference type="TreeFam" id="TF329836"/>
<dbReference type="BioGRID-ORCS" id="244058">
    <property type="hits" value="6 hits in 78 CRISPR screens"/>
</dbReference>
<dbReference type="ChiTaRS" id="Rgma">
    <property type="organism name" value="mouse"/>
</dbReference>
<dbReference type="PRO" id="PR:Q6PCX7"/>
<dbReference type="Proteomes" id="UP000000589">
    <property type="component" value="Chromosome 7"/>
</dbReference>
<dbReference type="RNAct" id="Q6PCX7">
    <property type="molecule type" value="protein"/>
</dbReference>
<dbReference type="Bgee" id="ENSMUSG00000070509">
    <property type="expression patterns" value="Expressed in embryonic brain and 211 other cell types or tissues"/>
</dbReference>
<dbReference type="ExpressionAtlas" id="Q6PCX7">
    <property type="expression patterns" value="baseline and differential"/>
</dbReference>
<dbReference type="GO" id="GO:0009986">
    <property type="term" value="C:cell surface"/>
    <property type="evidence" value="ECO:0000314"/>
    <property type="project" value="MGI"/>
</dbReference>
<dbReference type="GO" id="GO:0005783">
    <property type="term" value="C:endoplasmic reticulum"/>
    <property type="evidence" value="ECO:0007669"/>
    <property type="project" value="Ensembl"/>
</dbReference>
<dbReference type="GO" id="GO:0005886">
    <property type="term" value="C:plasma membrane"/>
    <property type="evidence" value="ECO:0007669"/>
    <property type="project" value="UniProtKB-SubCell"/>
</dbReference>
<dbReference type="GO" id="GO:0098552">
    <property type="term" value="C:side of membrane"/>
    <property type="evidence" value="ECO:0007669"/>
    <property type="project" value="UniProtKB-KW"/>
</dbReference>
<dbReference type="GO" id="GO:0015026">
    <property type="term" value="F:coreceptor activity"/>
    <property type="evidence" value="ECO:0000316"/>
    <property type="project" value="MGI"/>
</dbReference>
<dbReference type="GO" id="GO:0005102">
    <property type="term" value="F:signaling receptor binding"/>
    <property type="evidence" value="ECO:0000353"/>
    <property type="project" value="MGI"/>
</dbReference>
<dbReference type="GO" id="GO:1990459">
    <property type="term" value="F:transferrin receptor binding"/>
    <property type="evidence" value="ECO:0007669"/>
    <property type="project" value="Ensembl"/>
</dbReference>
<dbReference type="GO" id="GO:0030509">
    <property type="term" value="P:BMP signaling pathway"/>
    <property type="evidence" value="ECO:0000316"/>
    <property type="project" value="MGI"/>
</dbReference>
<dbReference type="GO" id="GO:0006509">
    <property type="term" value="P:membrane protein ectodomain proteolysis"/>
    <property type="evidence" value="ECO:0000314"/>
    <property type="project" value="MGI"/>
</dbReference>
<dbReference type="GO" id="GO:0048681">
    <property type="term" value="P:negative regulation of axon regeneration"/>
    <property type="evidence" value="ECO:0007669"/>
    <property type="project" value="Ensembl"/>
</dbReference>
<dbReference type="GO" id="GO:0048671">
    <property type="term" value="P:negative regulation of collateral sprouting"/>
    <property type="evidence" value="ECO:0007669"/>
    <property type="project" value="Ensembl"/>
</dbReference>
<dbReference type="GO" id="GO:0010977">
    <property type="term" value="P:negative regulation of neuron projection development"/>
    <property type="evidence" value="ECO:0000315"/>
    <property type="project" value="MGI"/>
</dbReference>
<dbReference type="GO" id="GO:0001843">
    <property type="term" value="P:neural tube closure"/>
    <property type="evidence" value="ECO:0000315"/>
    <property type="project" value="MGI"/>
</dbReference>
<dbReference type="GO" id="GO:0031175">
    <property type="term" value="P:neuron projection development"/>
    <property type="evidence" value="ECO:0000315"/>
    <property type="project" value="MGI"/>
</dbReference>
<dbReference type="GO" id="GO:0051044">
    <property type="term" value="P:positive regulation of membrane protein ectodomain proteolysis"/>
    <property type="evidence" value="ECO:0000314"/>
    <property type="project" value="MGI"/>
</dbReference>
<dbReference type="GO" id="GO:0010976">
    <property type="term" value="P:positive regulation of neuron projection development"/>
    <property type="evidence" value="ECO:0007669"/>
    <property type="project" value="Ensembl"/>
</dbReference>
<dbReference type="GO" id="GO:0045944">
    <property type="term" value="P:positive regulation of transcription by RNA polymerase II"/>
    <property type="evidence" value="ECO:0007669"/>
    <property type="project" value="Ensembl"/>
</dbReference>
<dbReference type="GO" id="GO:0030510">
    <property type="term" value="P:regulation of BMP signaling pathway"/>
    <property type="evidence" value="ECO:0000314"/>
    <property type="project" value="MGI"/>
</dbReference>
<dbReference type="FunFam" id="3.40.1000.10:FF:000001">
    <property type="entry name" value="Repulsive guidance molecule BMP co-receptor a"/>
    <property type="match status" value="1"/>
</dbReference>
<dbReference type="Gene3D" id="3.40.1000.10">
    <property type="entry name" value="Mog1/PsbP, alpha/beta/alpha sandwich"/>
    <property type="match status" value="1"/>
</dbReference>
<dbReference type="InterPro" id="IPR040287">
    <property type="entry name" value="RGM"/>
</dbReference>
<dbReference type="InterPro" id="IPR009496">
    <property type="entry name" value="RGM_C"/>
</dbReference>
<dbReference type="InterPro" id="IPR010536">
    <property type="entry name" value="RGM_N"/>
</dbReference>
<dbReference type="PANTHER" id="PTHR31428:SF4">
    <property type="entry name" value="REPULSIVE GUIDANCE MOLECULE A"/>
    <property type="match status" value="1"/>
</dbReference>
<dbReference type="PANTHER" id="PTHR31428">
    <property type="entry name" value="RGM DOMAIN FAMILY MEMBER DRAG-1"/>
    <property type="match status" value="1"/>
</dbReference>
<dbReference type="Pfam" id="PF06534">
    <property type="entry name" value="RGM_C"/>
    <property type="match status" value="1"/>
</dbReference>
<dbReference type="Pfam" id="PF06535">
    <property type="entry name" value="RGM_N"/>
    <property type="match status" value="1"/>
</dbReference>
<comment type="function">
    <text evidence="5 6 7 8 9 10 11">Member of the repulsive guidance molecule (RGM) family that performs several functions in the developing and adult nervous system. Regulates cephalic neural tube closure, inhibits neurite outgrowth and cortical neuron branching, and the formation of mature synapses. Binding to its receptor NEO1/neogenin induces activation of RHOA-ROCK1/Rho-kinase signaling pathway through UNC5B-ARHGEF12/LARG-PTK2/FAK1 cascade, leading to collapse of the neuronal growth cone and neurite outgrowth inhibition. Furthermore, RGMA binding to NEO1/neogenin leads to HRAS inactivation by influencing HRAS-PTK2/FAK1-AKT1 pathway. It also functions as a bone morphogenetic protein (BMP) coreceptor that may signal through SMAD1, SMAD5, and SMAD8.</text>
</comment>
<comment type="subunit">
    <text evidence="7 8 9">Interacts with NEO1, BMP2 and BMP4.</text>
</comment>
<comment type="subcellular location">
    <subcellularLocation>
        <location evidence="1">Cell membrane</location>
        <topology evidence="1">Lipid-anchor</topology>
        <topology evidence="1">GPI-anchor</topology>
    </subcellularLocation>
</comment>
<comment type="alternative products">
    <event type="alternative splicing"/>
    <isoform>
        <id>Q6PCX7-1</id>
        <name>1</name>
        <sequence type="displayed"/>
    </isoform>
    <isoform>
        <id>Q6PCX7-2</id>
        <name>2</name>
        <sequence type="described" ref="VSP_011316"/>
    </isoform>
</comment>
<comment type="tissue specificity">
    <text>Expressed in gradient in periventricular layers of the developing nervous system. In adult, expressed in scattered cells throughout the brain.</text>
</comment>
<comment type="developmental stage">
    <text evidence="4 6">Expressed in the early developing nervous system, with the exception of prominent gaps in the mid-hindbrain and the fore-midbrain boundaries. By 10.5 dpc, expression in the nervous system decreases slightly and a segmented pattern of expression appears, marking the ventral sites of somitic buds. At that stage, the expression shows a strong dorsal to ventral gradient. In the neural tubes, strong expression is detected at the level of the floor plate and in the medial portion of the neural tubes. Lower expression is detected in the dorsal neural tube and the ventral aspect corresponding to the area of motoneuron differentiation. In the developing eye, expressed in the perioptic mesenchyme.</text>
</comment>
<comment type="PTM">
    <text evidence="1">Autocatalytically cleaved at low pH; the two chains remain linked via two disulfide bonds.</text>
</comment>
<comment type="similarity">
    <text evidence="14">Belongs to the repulsive guidance molecule (RGM) family.</text>
</comment>
<sequence length="454" mass="49676">MQPPRERLVVTGRAGWMGMGRGAGRSALGLWPTLAFLLCSFPAAISPCKILKCNSEFWSATSSGSHAPASDDVPEFCAALRTYALCTRRTARTCRGDLAYHSAVHGIEDLMSQHNCSKDGPTSQPRVRTLPPAGDSQERSDSPEICHYEKSFHKHSAAPNYTHCGLFGDPHLRTFTDHFQTCKVQGAWPLIDNNYLNVQVTNTPVLPGSAATATSKLTIIFKNFQECVDQKVYQAEMDELPSAFADGSKNGGDKHGANSLKITEKVSGQHVEIQAKYIGTTIVVRQVGRYLTFAVRMPEEVVNAVEDRDSQGLYLCLRGCPLNQQIDFQAFRANAESPRRPAAASPSPVVPETFPYETAVAKCKEKLPVEDLYYQACVFDLLTTGDVNFTLAAYYALEDGKMLHSNKDKLHLFERTRELPGAVAAAAAAATTFPLAPQILLGTIPLLVLLPVLW</sequence>
<evidence type="ECO:0000250" key="1"/>
<evidence type="ECO:0000255" key="2"/>
<evidence type="ECO:0000256" key="3">
    <source>
        <dbReference type="SAM" id="MobiDB-lite"/>
    </source>
</evidence>
<evidence type="ECO:0000269" key="4">
    <source>
    </source>
</evidence>
<evidence type="ECO:0000269" key="5">
    <source>
    </source>
</evidence>
<evidence type="ECO:0000269" key="6">
    <source>
    </source>
</evidence>
<evidence type="ECO:0000269" key="7">
    <source>
    </source>
</evidence>
<evidence type="ECO:0000269" key="8">
    <source>
    </source>
</evidence>
<evidence type="ECO:0000269" key="9">
    <source>
    </source>
</evidence>
<evidence type="ECO:0000269" key="10">
    <source>
    </source>
</evidence>
<evidence type="ECO:0000269" key="11">
    <source>
    </source>
</evidence>
<evidence type="ECO:0000303" key="12">
    <source>
    </source>
</evidence>
<evidence type="ECO:0000303" key="13">
    <source>
    </source>
</evidence>
<evidence type="ECO:0000305" key="14"/>
<gene>
    <name type="primary">Rgma</name>
</gene>
<name>RGMA_MOUSE</name>
<organism>
    <name type="scientific">Mus musculus</name>
    <name type="common">Mouse</name>
    <dbReference type="NCBI Taxonomy" id="10090"/>
    <lineage>
        <taxon>Eukaryota</taxon>
        <taxon>Metazoa</taxon>
        <taxon>Chordata</taxon>
        <taxon>Craniata</taxon>
        <taxon>Vertebrata</taxon>
        <taxon>Euteleostomi</taxon>
        <taxon>Mammalia</taxon>
        <taxon>Eutheria</taxon>
        <taxon>Euarchontoglires</taxon>
        <taxon>Glires</taxon>
        <taxon>Rodentia</taxon>
        <taxon>Myomorpha</taxon>
        <taxon>Muroidea</taxon>
        <taxon>Muridae</taxon>
        <taxon>Murinae</taxon>
        <taxon>Mus</taxon>
        <taxon>Mus</taxon>
    </lineage>
</organism>